<evidence type="ECO:0000250" key="1"/>
<evidence type="ECO:0000256" key="2">
    <source>
        <dbReference type="SAM" id="MobiDB-lite"/>
    </source>
</evidence>
<evidence type="ECO:0000305" key="3"/>
<sequence>IMMAMKLEKENALEKAINLENQLKEKAKDFEKKEEEMNDWLSKVKNIQTEVDTVQESLQEAISKLEETEKRATNAEAEVAAMTRRIRLLEEDFEQSSGRLTETSTKLDDASKAAEESERNRKTLETRSISDDERMAQLEEQVKEAKYIAEDAERKYDEAARRLAVTEVDLERAESRLETSESKIVELEEELRIVGNNMKSLEVSEQESLQREESYEETIRDLTERLKTAEQRAAEAERQVSKLQNEVDRLEDELLSEKERYRAISGELDTTFAELTSF</sequence>
<comment type="function">
    <text>Tropomyosin, in association with the troponin complex, plays a central role in the calcium dependent regulation of muscle contraction.</text>
</comment>
<comment type="subunit">
    <text evidence="1">Homodimer.</text>
</comment>
<comment type="domain">
    <text>The molecule is in a coiled coil structure that is formed by 2 polypeptide chains. The sequence exhibits a prominent seven-residues periodicity.</text>
</comment>
<comment type="similarity">
    <text evidence="3">Belongs to the tropomyosin family.</text>
</comment>
<organism>
    <name type="scientific">Echinococcus granulosus</name>
    <name type="common">Hydatid tapeworm</name>
    <dbReference type="NCBI Taxonomy" id="6210"/>
    <lineage>
        <taxon>Eukaryota</taxon>
        <taxon>Metazoa</taxon>
        <taxon>Spiralia</taxon>
        <taxon>Lophotrochozoa</taxon>
        <taxon>Platyhelminthes</taxon>
        <taxon>Cestoda</taxon>
        <taxon>Eucestoda</taxon>
        <taxon>Cyclophyllidea</taxon>
        <taxon>Taeniidae</taxon>
        <taxon>Echinococcus</taxon>
        <taxon>Echinococcus granulosus group</taxon>
    </lineage>
</organism>
<feature type="chain" id="PRO_0000205652" description="Tropomyosin A">
    <location>
        <begin position="1" status="less than"/>
        <end position="278"/>
    </location>
</feature>
<feature type="region of interest" description="Disordered" evidence="2">
    <location>
        <begin position="92"/>
        <end position="134"/>
    </location>
</feature>
<feature type="coiled-coil region" evidence="1">
    <location>
        <begin position="1" status="less than"/>
        <end position="270"/>
    </location>
</feature>
<feature type="compositionally biased region" description="Polar residues" evidence="2">
    <location>
        <begin position="95"/>
        <end position="104"/>
    </location>
</feature>
<feature type="compositionally biased region" description="Basic and acidic residues" evidence="2">
    <location>
        <begin position="105"/>
        <end position="134"/>
    </location>
</feature>
<feature type="non-terminal residue">
    <location>
        <position position="1"/>
    </location>
</feature>
<accession>O16127</accession>
<reference key="1">
    <citation type="submission" date="2008-01" db="EMBL/GenBank/DDBJ databases">
        <authorList>
            <person name="Esteves A."/>
            <person name="Senorale M."/>
            <person name="Fernandez C."/>
            <person name="Bruzzone H."/>
            <person name="Ehrlich R."/>
        </authorList>
    </citation>
    <scope>NUCLEOTIDE SEQUENCE [MRNA]</scope>
</reference>
<protein>
    <recommendedName>
        <fullName>Tropomyosin A</fullName>
        <shortName>EgTrpA</shortName>
    </recommendedName>
</protein>
<proteinExistence type="evidence at transcript level"/>
<keyword id="KW-0175">Coiled coil</keyword>
<keyword id="KW-0677">Repeat</keyword>
<name>TPM_ECHGR</name>
<dbReference type="EMBL" id="AF011923">
    <property type="protein sequence ID" value="AAB65799.4"/>
    <property type="molecule type" value="mRNA"/>
</dbReference>
<dbReference type="SMR" id="O16127"/>
<dbReference type="OrthoDB" id="128924at2759"/>
<dbReference type="Proteomes" id="UP000492820">
    <property type="component" value="Unplaced"/>
</dbReference>
<dbReference type="FunFam" id="1.20.5.170:FF:000005">
    <property type="entry name" value="Tropomyosin alpha-1 chain"/>
    <property type="match status" value="1"/>
</dbReference>
<dbReference type="FunFam" id="1.20.5.170:FF:000001">
    <property type="entry name" value="Tropomyosin alpha-1 chain isoform 1"/>
    <property type="match status" value="1"/>
</dbReference>
<dbReference type="FunFam" id="1.20.5.340:FF:000001">
    <property type="entry name" value="Tropomyosin alpha-1 chain isoform 2"/>
    <property type="match status" value="1"/>
</dbReference>
<dbReference type="Gene3D" id="1.20.5.170">
    <property type="match status" value="2"/>
</dbReference>
<dbReference type="Gene3D" id="1.20.5.340">
    <property type="match status" value="1"/>
</dbReference>
<dbReference type="InterPro" id="IPR000533">
    <property type="entry name" value="Tropomyosin"/>
</dbReference>
<dbReference type="PANTHER" id="PTHR19269">
    <property type="entry name" value="TROPOMYOSIN"/>
    <property type="match status" value="1"/>
</dbReference>
<dbReference type="Pfam" id="PF00261">
    <property type="entry name" value="Tropomyosin"/>
    <property type="match status" value="1"/>
</dbReference>
<dbReference type="PRINTS" id="PR00194">
    <property type="entry name" value="TROPOMYOSIN"/>
</dbReference>
<dbReference type="SUPFAM" id="SSF57997">
    <property type="entry name" value="Tropomyosin"/>
    <property type="match status" value="1"/>
</dbReference>